<feature type="chain" id="PRO_1000058363" description="6,7-dimethyl-8-ribityllumazine synthase">
    <location>
        <begin position="1"/>
        <end position="156"/>
    </location>
</feature>
<feature type="active site" description="Proton donor" evidence="1">
    <location>
        <position position="89"/>
    </location>
</feature>
<feature type="binding site" evidence="1">
    <location>
        <position position="23"/>
    </location>
    <ligand>
        <name>5-amino-6-(D-ribitylamino)uracil</name>
        <dbReference type="ChEBI" id="CHEBI:15934"/>
    </ligand>
</feature>
<feature type="binding site" evidence="1">
    <location>
        <begin position="57"/>
        <end position="59"/>
    </location>
    <ligand>
        <name>5-amino-6-(D-ribitylamino)uracil</name>
        <dbReference type="ChEBI" id="CHEBI:15934"/>
    </ligand>
</feature>
<feature type="binding site" evidence="1">
    <location>
        <begin position="81"/>
        <end position="83"/>
    </location>
    <ligand>
        <name>5-amino-6-(D-ribitylamino)uracil</name>
        <dbReference type="ChEBI" id="CHEBI:15934"/>
    </ligand>
</feature>
<feature type="binding site" evidence="1">
    <location>
        <begin position="86"/>
        <end position="87"/>
    </location>
    <ligand>
        <name>(2S)-2-hydroxy-3-oxobutyl phosphate</name>
        <dbReference type="ChEBI" id="CHEBI:58830"/>
    </ligand>
</feature>
<feature type="binding site" evidence="1">
    <location>
        <position position="114"/>
    </location>
    <ligand>
        <name>5-amino-6-(D-ribitylamino)uracil</name>
        <dbReference type="ChEBI" id="CHEBI:15934"/>
    </ligand>
</feature>
<feature type="binding site" evidence="1">
    <location>
        <position position="128"/>
    </location>
    <ligand>
        <name>(2S)-2-hydroxy-3-oxobutyl phosphate</name>
        <dbReference type="ChEBI" id="CHEBI:58830"/>
    </ligand>
</feature>
<reference key="1">
    <citation type="journal article" date="2007" name="PLoS ONE">
        <title>The complete genome sequence and analysis of the Epsilonproteobacterium Arcobacter butzleri.</title>
        <authorList>
            <person name="Miller W.G."/>
            <person name="Parker C.T."/>
            <person name="Rubenfield M."/>
            <person name="Mendz G.L."/>
            <person name="Woesten M.M.S.M."/>
            <person name="Ussery D.W."/>
            <person name="Stolz J.F."/>
            <person name="Binnewies T.T."/>
            <person name="Hallin P.F."/>
            <person name="Wang G."/>
            <person name="Malek J.A."/>
            <person name="Rogosin A."/>
            <person name="Stanker L.H."/>
            <person name="Mandrell R.E."/>
        </authorList>
    </citation>
    <scope>NUCLEOTIDE SEQUENCE [LARGE SCALE GENOMIC DNA]</scope>
    <source>
        <strain>RM4018</strain>
    </source>
</reference>
<evidence type="ECO:0000255" key="1">
    <source>
        <dbReference type="HAMAP-Rule" id="MF_00178"/>
    </source>
</evidence>
<gene>
    <name evidence="1" type="primary">ribH</name>
    <name type="ordered locus">Abu_1846</name>
</gene>
<sequence length="156" mass="16719">MKVIEGVLRLKGNEKIAVINGRFNHIITDRLVEGARDAFKRHGGNEDNLDLILVPGAFEIPFALEKALSSGKYDAVCCVGAVIRGATPHFDYISAEATKGIATVGLKYGKPVSNGVLTTDTIEQAIERAGSKVGNKGAEAMVTIIEMLDLYNEMGK</sequence>
<organism>
    <name type="scientific">Aliarcobacter butzleri (strain RM4018)</name>
    <name type="common">Arcobacter butzleri</name>
    <dbReference type="NCBI Taxonomy" id="367737"/>
    <lineage>
        <taxon>Bacteria</taxon>
        <taxon>Pseudomonadati</taxon>
        <taxon>Campylobacterota</taxon>
        <taxon>Epsilonproteobacteria</taxon>
        <taxon>Campylobacterales</taxon>
        <taxon>Arcobacteraceae</taxon>
        <taxon>Aliarcobacter</taxon>
    </lineage>
</organism>
<name>RISB_ALIB4</name>
<comment type="function">
    <text evidence="1">Catalyzes the formation of 6,7-dimethyl-8-ribityllumazine by condensation of 5-amino-6-(D-ribitylamino)uracil with 3,4-dihydroxy-2-butanone 4-phosphate. This is the penultimate step in the biosynthesis of riboflavin.</text>
</comment>
<comment type="catalytic activity">
    <reaction evidence="1">
        <text>(2S)-2-hydroxy-3-oxobutyl phosphate + 5-amino-6-(D-ribitylamino)uracil = 6,7-dimethyl-8-(1-D-ribityl)lumazine + phosphate + 2 H2O + H(+)</text>
        <dbReference type="Rhea" id="RHEA:26152"/>
        <dbReference type="ChEBI" id="CHEBI:15377"/>
        <dbReference type="ChEBI" id="CHEBI:15378"/>
        <dbReference type="ChEBI" id="CHEBI:15934"/>
        <dbReference type="ChEBI" id="CHEBI:43474"/>
        <dbReference type="ChEBI" id="CHEBI:58201"/>
        <dbReference type="ChEBI" id="CHEBI:58830"/>
        <dbReference type="EC" id="2.5.1.78"/>
    </reaction>
</comment>
<comment type="pathway">
    <text evidence="1">Cofactor biosynthesis; riboflavin biosynthesis; riboflavin from 2-hydroxy-3-oxobutyl phosphate and 5-amino-6-(D-ribitylamino)uracil: step 1/2.</text>
</comment>
<comment type="similarity">
    <text evidence="1">Belongs to the DMRL synthase family.</text>
</comment>
<protein>
    <recommendedName>
        <fullName evidence="1">6,7-dimethyl-8-ribityllumazine synthase</fullName>
        <shortName evidence="1">DMRL synthase</shortName>
        <shortName evidence="1">LS</shortName>
        <shortName evidence="1">Lumazine synthase</shortName>
        <ecNumber evidence="1">2.5.1.78</ecNumber>
    </recommendedName>
</protein>
<dbReference type="EC" id="2.5.1.78" evidence="1"/>
<dbReference type="EMBL" id="CP000361">
    <property type="protein sequence ID" value="ABV68086.1"/>
    <property type="molecule type" value="Genomic_DNA"/>
</dbReference>
<dbReference type="RefSeq" id="WP_004511225.1">
    <property type="nucleotide sequence ID" value="NC_009850.1"/>
</dbReference>
<dbReference type="SMR" id="A8EVW3"/>
<dbReference type="STRING" id="367737.Abu_1846"/>
<dbReference type="GeneID" id="24305178"/>
<dbReference type="KEGG" id="abu:Abu_1846"/>
<dbReference type="eggNOG" id="COG0054">
    <property type="taxonomic scope" value="Bacteria"/>
</dbReference>
<dbReference type="HOGENOM" id="CLU_089358_1_1_7"/>
<dbReference type="UniPathway" id="UPA00275">
    <property type="reaction ID" value="UER00404"/>
</dbReference>
<dbReference type="Proteomes" id="UP000001136">
    <property type="component" value="Chromosome"/>
</dbReference>
<dbReference type="GO" id="GO:0005829">
    <property type="term" value="C:cytosol"/>
    <property type="evidence" value="ECO:0007669"/>
    <property type="project" value="TreeGrafter"/>
</dbReference>
<dbReference type="GO" id="GO:0009349">
    <property type="term" value="C:riboflavin synthase complex"/>
    <property type="evidence" value="ECO:0007669"/>
    <property type="project" value="InterPro"/>
</dbReference>
<dbReference type="GO" id="GO:0000906">
    <property type="term" value="F:6,7-dimethyl-8-ribityllumazine synthase activity"/>
    <property type="evidence" value="ECO:0007669"/>
    <property type="project" value="UniProtKB-UniRule"/>
</dbReference>
<dbReference type="GO" id="GO:0009231">
    <property type="term" value="P:riboflavin biosynthetic process"/>
    <property type="evidence" value="ECO:0007669"/>
    <property type="project" value="UniProtKB-UniRule"/>
</dbReference>
<dbReference type="CDD" id="cd09209">
    <property type="entry name" value="Lumazine_synthase-I"/>
    <property type="match status" value="1"/>
</dbReference>
<dbReference type="FunFam" id="3.40.50.960:FF:000001">
    <property type="entry name" value="6,7-dimethyl-8-ribityllumazine synthase"/>
    <property type="match status" value="1"/>
</dbReference>
<dbReference type="Gene3D" id="3.40.50.960">
    <property type="entry name" value="Lumazine/riboflavin synthase"/>
    <property type="match status" value="1"/>
</dbReference>
<dbReference type="HAMAP" id="MF_00178">
    <property type="entry name" value="Lumazine_synth"/>
    <property type="match status" value="1"/>
</dbReference>
<dbReference type="InterPro" id="IPR034964">
    <property type="entry name" value="LS"/>
</dbReference>
<dbReference type="InterPro" id="IPR002180">
    <property type="entry name" value="LS/RS"/>
</dbReference>
<dbReference type="InterPro" id="IPR036467">
    <property type="entry name" value="LS/RS_sf"/>
</dbReference>
<dbReference type="NCBIfam" id="TIGR00114">
    <property type="entry name" value="lumazine-synth"/>
    <property type="match status" value="1"/>
</dbReference>
<dbReference type="PANTHER" id="PTHR21058:SF0">
    <property type="entry name" value="6,7-DIMETHYL-8-RIBITYLLUMAZINE SYNTHASE"/>
    <property type="match status" value="1"/>
</dbReference>
<dbReference type="PANTHER" id="PTHR21058">
    <property type="entry name" value="6,7-DIMETHYL-8-RIBITYLLUMAZINE SYNTHASE DMRL SYNTHASE LUMAZINE SYNTHASE"/>
    <property type="match status" value="1"/>
</dbReference>
<dbReference type="Pfam" id="PF00885">
    <property type="entry name" value="DMRL_synthase"/>
    <property type="match status" value="1"/>
</dbReference>
<dbReference type="SUPFAM" id="SSF52121">
    <property type="entry name" value="Lumazine synthase"/>
    <property type="match status" value="1"/>
</dbReference>
<accession>A8EVW3</accession>
<proteinExistence type="inferred from homology"/>
<keyword id="KW-1185">Reference proteome</keyword>
<keyword id="KW-0686">Riboflavin biosynthesis</keyword>
<keyword id="KW-0808">Transferase</keyword>